<feature type="chain" id="PRO_0000050091" description="Poly(rC)-binding protein 2">
    <location>
        <begin position="1"/>
        <end position="362"/>
    </location>
</feature>
<feature type="domain" description="KH 1" evidence="2">
    <location>
        <begin position="13"/>
        <end position="75"/>
    </location>
</feature>
<feature type="domain" description="KH 2" evidence="2">
    <location>
        <begin position="97"/>
        <end position="162"/>
    </location>
</feature>
<feature type="domain" description="KH 3" evidence="2">
    <location>
        <begin position="284"/>
        <end position="348"/>
    </location>
</feature>
<feature type="modified residue" description="Phosphoserine" evidence="1">
    <location>
        <position position="169"/>
    </location>
</feature>
<feature type="modified residue" description="Phosphoserine" evidence="1">
    <location>
        <position position="185"/>
    </location>
</feature>
<feature type="modified residue" description="Phosphoserine" evidence="1">
    <location>
        <position position="268"/>
    </location>
</feature>
<feature type="modified residue" description="Phosphoserine" evidence="1">
    <location>
        <position position="361"/>
    </location>
</feature>
<feature type="modified residue" description="Phosphoserine" evidence="1">
    <location>
        <position position="362"/>
    </location>
</feature>
<feature type="cross-link" description="Glycyl lysine isopeptide (Lys-Gly) (interchain with G-Cter in SUMO2)" evidence="1">
    <location>
        <position position="115"/>
    </location>
</feature>
<feature type="cross-link" description="Glycyl lysine isopeptide (Lys-Gly) (interchain with G-Cter in SUMO2)" evidence="1">
    <location>
        <position position="181"/>
    </location>
</feature>
<feature type="cross-link" description="Glycyl lysine isopeptide (Lys-Gly) (interchain with G-Cter in SUMO2)" evidence="1">
    <location>
        <position position="319"/>
    </location>
</feature>
<feature type="splice variant" id="VSP_002820" description="In isoform 2." evidence="7">
    <location>
        <begin position="194"/>
        <end position="224"/>
    </location>
</feature>
<feature type="splice variant" id="VSP_002821" description="In isoform 3." evidence="8">
    <location>
        <begin position="263"/>
        <end position="275"/>
    </location>
</feature>
<dbReference type="EMBL" id="L19661">
    <property type="protein sequence ID" value="AAA03705.1"/>
    <property type="molecule type" value="mRNA"/>
</dbReference>
<dbReference type="EMBL" id="X75947">
    <property type="protein sequence ID" value="CAA53546.1"/>
    <property type="molecule type" value="mRNA"/>
</dbReference>
<dbReference type="EMBL" id="X97982">
    <property type="protein sequence ID" value="CAA66619.1"/>
    <property type="molecule type" value="mRNA"/>
</dbReference>
<dbReference type="EMBL" id="AF236845">
    <property type="protein sequence ID" value="AAK14059.1"/>
    <property type="molecule type" value="Genomic_DNA"/>
</dbReference>
<dbReference type="EMBL" id="AF236842">
    <property type="protein sequence ID" value="AAK14059.1"/>
    <property type="status" value="JOINED"/>
    <property type="molecule type" value="Genomic_DNA"/>
</dbReference>
<dbReference type="EMBL" id="AF236843">
    <property type="protein sequence ID" value="AAK14059.1"/>
    <property type="status" value="JOINED"/>
    <property type="molecule type" value="Genomic_DNA"/>
</dbReference>
<dbReference type="EMBL" id="AF236844">
    <property type="protein sequence ID" value="AAK14059.1"/>
    <property type="status" value="JOINED"/>
    <property type="molecule type" value="Genomic_DNA"/>
</dbReference>
<dbReference type="CCDS" id="CCDS27884.1">
    <molecule id="Q61990-3"/>
</dbReference>
<dbReference type="CCDS" id="CCDS49741.1">
    <molecule id="Q61990-1"/>
</dbReference>
<dbReference type="CCDS" id="CCDS49742.1">
    <molecule id="Q61990-2"/>
</dbReference>
<dbReference type="PIR" id="S78515">
    <property type="entry name" value="S78515"/>
</dbReference>
<dbReference type="RefSeq" id="NP_001096635.1">
    <molecule id="Q61990-1"/>
    <property type="nucleotide sequence ID" value="NM_001103165.2"/>
</dbReference>
<dbReference type="RefSeq" id="NP_001096636.1">
    <molecule id="Q61990-2"/>
    <property type="nucleotide sequence ID" value="NM_001103166.2"/>
</dbReference>
<dbReference type="RefSeq" id="NP_001398467.1">
    <molecule id="Q61990-2"/>
    <property type="nucleotide sequence ID" value="NM_001411538.1"/>
</dbReference>
<dbReference type="RefSeq" id="NP_001398468.1">
    <molecule id="Q61990-1"/>
    <property type="nucleotide sequence ID" value="NM_001411539.1"/>
</dbReference>
<dbReference type="RefSeq" id="NP_001398471.1">
    <molecule id="Q61990-3"/>
    <property type="nucleotide sequence ID" value="NM_001411542.1"/>
</dbReference>
<dbReference type="RefSeq" id="NP_035172.2">
    <molecule id="Q61990-3"/>
    <property type="nucleotide sequence ID" value="NM_011042.3"/>
</dbReference>
<dbReference type="RefSeq" id="XP_030104256.1">
    <molecule id="Q61990-1"/>
    <property type="nucleotide sequence ID" value="XM_030248396.1"/>
</dbReference>
<dbReference type="SMR" id="Q61990"/>
<dbReference type="BioGRID" id="202043">
    <property type="interactions" value="33"/>
</dbReference>
<dbReference type="FunCoup" id="Q61990">
    <property type="interactions" value="4449"/>
</dbReference>
<dbReference type="IntAct" id="Q61990">
    <property type="interactions" value="20"/>
</dbReference>
<dbReference type="MINT" id="Q61990"/>
<dbReference type="STRING" id="10090.ENSMUSP00000077509"/>
<dbReference type="GlyGen" id="Q61990">
    <property type="glycosylation" value="4 sites, 3 N-linked glycans (3 sites), 1 O-linked glycan (1 site)"/>
</dbReference>
<dbReference type="iPTMnet" id="Q61990"/>
<dbReference type="PhosphoSitePlus" id="Q61990"/>
<dbReference type="SwissPalm" id="Q61990"/>
<dbReference type="REPRODUCTION-2DPAGE" id="Q61990"/>
<dbReference type="jPOST" id="Q61990"/>
<dbReference type="PaxDb" id="10090-ENSMUSP00000076294"/>
<dbReference type="PeptideAtlas" id="Q61990"/>
<dbReference type="ProteomicsDB" id="294027">
    <molecule id="Q61990-1"/>
</dbReference>
<dbReference type="ProteomicsDB" id="294028">
    <molecule id="Q61990-2"/>
</dbReference>
<dbReference type="ProteomicsDB" id="294029">
    <molecule id="Q61990-3"/>
</dbReference>
<dbReference type="Pumba" id="Q61990"/>
<dbReference type="Antibodypedia" id="15218">
    <property type="antibodies" value="287 antibodies from 36 providers"/>
</dbReference>
<dbReference type="DNASU" id="18521"/>
<dbReference type="Ensembl" id="ENSMUST00000077037.13">
    <molecule id="Q61990-1"/>
    <property type="protein sequence ID" value="ENSMUSP00000076294.6"/>
    <property type="gene ID" value="ENSMUSG00000056851.16"/>
</dbReference>
<dbReference type="Ensembl" id="ENSMUST00000078404.15">
    <molecule id="Q61990-1"/>
    <property type="protein sequence ID" value="ENSMUSP00000077509.9"/>
    <property type="gene ID" value="ENSMUSG00000056851.16"/>
</dbReference>
<dbReference type="Ensembl" id="ENSMUST00000229618.2">
    <molecule id="Q61990-2"/>
    <property type="protein sequence ID" value="ENSMUSP00000155430.2"/>
    <property type="gene ID" value="ENSMUSG00000056851.16"/>
</dbReference>
<dbReference type="Ensembl" id="ENSMUST00000229854.2">
    <molecule id="Q61990-3"/>
    <property type="protein sequence ID" value="ENSMUSP00000155038.2"/>
    <property type="gene ID" value="ENSMUSG00000056851.16"/>
</dbReference>
<dbReference type="GeneID" id="18521"/>
<dbReference type="KEGG" id="mmu:18521"/>
<dbReference type="UCSC" id="uc007xvy.2">
    <molecule id="Q61990-1"/>
    <property type="organism name" value="mouse"/>
</dbReference>
<dbReference type="UCSC" id="uc007xvz.2">
    <molecule id="Q61990-2"/>
    <property type="organism name" value="mouse"/>
</dbReference>
<dbReference type="UCSC" id="uc009vat.1">
    <molecule id="Q61990-3"/>
    <property type="organism name" value="mouse"/>
</dbReference>
<dbReference type="AGR" id="MGI:108202"/>
<dbReference type="CTD" id="5094"/>
<dbReference type="MGI" id="MGI:108202">
    <property type="gene designation" value="Pcbp2"/>
</dbReference>
<dbReference type="VEuPathDB" id="HostDB:ENSMUSG00000056851"/>
<dbReference type="eggNOG" id="KOG2190">
    <property type="taxonomic scope" value="Eukaryota"/>
</dbReference>
<dbReference type="GeneTree" id="ENSGT00940000154129"/>
<dbReference type="HOGENOM" id="CLU_022670_0_1_1"/>
<dbReference type="InParanoid" id="Q61990"/>
<dbReference type="OMA" id="SIAKEPH"/>
<dbReference type="PhylomeDB" id="Q61990"/>
<dbReference type="TreeFam" id="TF318292"/>
<dbReference type="Reactome" id="R-MMU-72163">
    <property type="pathway name" value="mRNA Splicing - Major Pathway"/>
</dbReference>
<dbReference type="Reactome" id="R-MMU-72203">
    <property type="pathway name" value="Processing of Capped Intron-Containing Pre-mRNA"/>
</dbReference>
<dbReference type="BioGRID-ORCS" id="18521">
    <property type="hits" value="22 hits in 82 CRISPR screens"/>
</dbReference>
<dbReference type="CD-CODE" id="CE726F99">
    <property type="entry name" value="Postsynaptic density"/>
</dbReference>
<dbReference type="CD-CODE" id="DE1E139C">
    <property type="entry name" value="Chromatoid body"/>
</dbReference>
<dbReference type="ChiTaRS" id="Pcbp2">
    <property type="organism name" value="mouse"/>
</dbReference>
<dbReference type="PRO" id="PR:Q61990"/>
<dbReference type="Proteomes" id="UP000000589">
    <property type="component" value="Chromosome 15"/>
</dbReference>
<dbReference type="RNAct" id="Q61990">
    <property type="molecule type" value="protein"/>
</dbReference>
<dbReference type="Bgee" id="ENSMUSG00000056851">
    <property type="expression patterns" value="Expressed in retinal neural layer and 260 other cell types or tissues"/>
</dbReference>
<dbReference type="ExpressionAtlas" id="Q61990">
    <property type="expression patterns" value="baseline and differential"/>
</dbReference>
<dbReference type="GO" id="GO:0005829">
    <property type="term" value="C:cytosol"/>
    <property type="evidence" value="ECO:0000266"/>
    <property type="project" value="MGI"/>
</dbReference>
<dbReference type="GO" id="GO:0005634">
    <property type="term" value="C:nucleus"/>
    <property type="evidence" value="ECO:0000314"/>
    <property type="project" value="MGI"/>
</dbReference>
<dbReference type="GO" id="GO:1990904">
    <property type="term" value="C:ribonucleoprotein complex"/>
    <property type="evidence" value="ECO:0007669"/>
    <property type="project" value="UniProtKB-KW"/>
</dbReference>
<dbReference type="GO" id="GO:1990829">
    <property type="term" value="F:C-rich single-stranded DNA binding"/>
    <property type="evidence" value="ECO:0000314"/>
    <property type="project" value="MGI"/>
</dbReference>
<dbReference type="GO" id="GO:0003677">
    <property type="term" value="F:DNA binding"/>
    <property type="evidence" value="ECO:0000314"/>
    <property type="project" value="MGI"/>
</dbReference>
<dbReference type="GO" id="GO:0034986">
    <property type="term" value="F:iron chaperone activity"/>
    <property type="evidence" value="ECO:0000266"/>
    <property type="project" value="MGI"/>
</dbReference>
<dbReference type="GO" id="GO:0003723">
    <property type="term" value="F:RNA binding"/>
    <property type="evidence" value="ECO:0007669"/>
    <property type="project" value="UniProtKB-KW"/>
</dbReference>
<dbReference type="GO" id="GO:0003697">
    <property type="term" value="F:single-stranded DNA binding"/>
    <property type="evidence" value="ECO:0000314"/>
    <property type="project" value="MGI"/>
</dbReference>
<dbReference type="GO" id="GO:0051607">
    <property type="term" value="P:defense response to virus"/>
    <property type="evidence" value="ECO:0007669"/>
    <property type="project" value="UniProtKB-KW"/>
</dbReference>
<dbReference type="GO" id="GO:0045087">
    <property type="term" value="P:innate immune response"/>
    <property type="evidence" value="ECO:0007669"/>
    <property type="project" value="UniProtKB-KW"/>
</dbReference>
<dbReference type="GO" id="GO:0050687">
    <property type="term" value="P:negative regulation of defense response to virus"/>
    <property type="evidence" value="ECO:0000250"/>
    <property type="project" value="UniProtKB"/>
</dbReference>
<dbReference type="GO" id="GO:0045944">
    <property type="term" value="P:positive regulation of transcription by RNA polymerase II"/>
    <property type="evidence" value="ECO:0000314"/>
    <property type="project" value="MGI"/>
</dbReference>
<dbReference type="GO" id="GO:0043161">
    <property type="term" value="P:proteasome-mediated ubiquitin-dependent protein catabolic process"/>
    <property type="evidence" value="ECO:0000250"/>
    <property type="project" value="UniProtKB"/>
</dbReference>
<dbReference type="GO" id="GO:0051604">
    <property type="term" value="P:protein maturation"/>
    <property type="evidence" value="ECO:0000266"/>
    <property type="project" value="MGI"/>
</dbReference>
<dbReference type="CDD" id="cd22515">
    <property type="entry name" value="KH-I_PCBP1_2_rpt1"/>
    <property type="match status" value="1"/>
</dbReference>
<dbReference type="CDD" id="cd22518">
    <property type="entry name" value="KH-I_PCBP1_2_rpt2"/>
    <property type="match status" value="1"/>
</dbReference>
<dbReference type="CDD" id="cd22521">
    <property type="entry name" value="KH-I_PCBP1_2_rpt3"/>
    <property type="match status" value="1"/>
</dbReference>
<dbReference type="FunFam" id="3.30.1370.10:FF:000002">
    <property type="entry name" value="poly(RC)-binding protein 2 isoform X1"/>
    <property type="match status" value="1"/>
</dbReference>
<dbReference type="FunFam" id="3.30.1370.10:FF:000003">
    <property type="entry name" value="poly(RC)-binding protein 2 isoform X1"/>
    <property type="match status" value="1"/>
</dbReference>
<dbReference type="FunFam" id="3.30.1370.10:FF:000005">
    <property type="entry name" value="poly(RC)-binding protein 2 isoform X1"/>
    <property type="match status" value="1"/>
</dbReference>
<dbReference type="Gene3D" id="3.30.1370.10">
    <property type="entry name" value="K Homology domain, type 1"/>
    <property type="match status" value="3"/>
</dbReference>
<dbReference type="InterPro" id="IPR004087">
    <property type="entry name" value="KH_dom"/>
</dbReference>
<dbReference type="InterPro" id="IPR004088">
    <property type="entry name" value="KH_dom_type_1"/>
</dbReference>
<dbReference type="InterPro" id="IPR036612">
    <property type="entry name" value="KH_dom_type_1_sf"/>
</dbReference>
<dbReference type="PANTHER" id="PTHR10288">
    <property type="entry name" value="KH DOMAIN CONTAINING RNA BINDING PROTEIN"/>
    <property type="match status" value="1"/>
</dbReference>
<dbReference type="Pfam" id="PF00013">
    <property type="entry name" value="KH_1"/>
    <property type="match status" value="3"/>
</dbReference>
<dbReference type="SMART" id="SM00322">
    <property type="entry name" value="KH"/>
    <property type="match status" value="3"/>
</dbReference>
<dbReference type="SUPFAM" id="SSF54791">
    <property type="entry name" value="Eukaryotic type KH-domain (KH-domain type I)"/>
    <property type="match status" value="3"/>
</dbReference>
<dbReference type="PROSITE" id="PS50084">
    <property type="entry name" value="KH_TYPE_1"/>
    <property type="match status" value="3"/>
</dbReference>
<reference key="1">
    <citation type="journal article" date="1993" name="Nucleic Acids Res.">
        <title>Isolation of a murine gene encoding a nucleic acid-binding protein with homology to hnRNP K.</title>
        <authorList>
            <person name="Hahm K.B."/>
            <person name="Kim G."/>
            <person name="Turch C."/>
            <person name="Smale S.T."/>
        </authorList>
    </citation>
    <scope>NUCLEOTIDE SEQUENCE [MRNA] (ISOFORMS 1 AND 2)</scope>
    <scope>FUNCTION</scope>
</reference>
<reference key="2">
    <citation type="journal article" date="1994" name="Nucleic Acids Res.">
        <title>Murine protein which binds preferentially to oligo-C-rich single-stranded nucleic acids.</title>
        <authorList>
            <person name="Goller M."/>
            <person name="Funke B."/>
            <person name="Gehe-Becker C."/>
            <person name="Kroeger B."/>
            <person name="Lottspeich F."/>
            <person name="Horak I."/>
        </authorList>
    </citation>
    <scope>NUCLEOTIDE SEQUENCE [MRNA]</scope>
    <scope>PARTIAL PROTEIN SEQUENCE (ISOFORM 2)</scope>
    <scope>FUNCTION</scope>
    <source>
        <strain>C57BL/6 X 129/Ola</strain>
        <tissue>Liver</tissue>
    </source>
</reference>
<reference key="3">
    <citation type="submission" date="1996-05" db="EMBL/GenBank/DDBJ databases">
        <authorList>
            <person name="Horak I."/>
        </authorList>
    </citation>
    <scope>NUCLEOTIDE SEQUENCE (ISOFORM 3)</scope>
    <source>
        <strain>C57BL/6 X CBA</strain>
        <tissue>Liver</tissue>
    </source>
</reference>
<reference key="4">
    <citation type="journal article" date="2000" name="Genomics">
        <title>Identification of two novel mammalian genes establishes a subfamily of KH-domain RNA-binding proteins.</title>
        <authorList>
            <person name="Makeyev A.V."/>
            <person name="Liebhaber S.A."/>
        </authorList>
    </citation>
    <scope>NUCLEOTIDE SEQUENCE (ISOFORM 1)</scope>
</reference>
<reference key="5">
    <citation type="journal article" date="2009" name="Mol. Cell. Proteomics">
        <title>Large scale localization of protein phosphorylation by use of electron capture dissociation mass spectrometry.</title>
        <authorList>
            <person name="Sweet S.M."/>
            <person name="Bailey C.M."/>
            <person name="Cunningham D.L."/>
            <person name="Heath J.K."/>
            <person name="Cooper H.J."/>
        </authorList>
    </citation>
    <scope>IDENTIFICATION BY MASS SPECTROMETRY [LARGE SCALE ANALYSIS]</scope>
    <source>
        <tissue>Embryonic fibroblast</tissue>
    </source>
</reference>
<reference key="6">
    <citation type="journal article" date="2010" name="Cell">
        <title>A tissue-specific atlas of mouse protein phosphorylation and expression.</title>
        <authorList>
            <person name="Huttlin E.L."/>
            <person name="Jedrychowski M.P."/>
            <person name="Elias J.E."/>
            <person name="Goswami T."/>
            <person name="Rad R."/>
            <person name="Beausoleil S.A."/>
            <person name="Villen J."/>
            <person name="Haas W."/>
            <person name="Sowa M.E."/>
            <person name="Gygi S.P."/>
        </authorList>
    </citation>
    <scope>IDENTIFICATION BY MASS SPECTROMETRY [LARGE SCALE ANALYSIS]</scope>
    <source>
        <tissue>Brain</tissue>
        <tissue>Brown adipose tissue</tissue>
        <tissue>Heart</tissue>
        <tissue>Kidney</tissue>
        <tissue>Liver</tissue>
        <tissue>Lung</tissue>
        <tissue>Pancreas</tissue>
        <tissue>Spleen</tissue>
        <tissue>Testis</tissue>
    </source>
</reference>
<reference key="7">
    <citation type="journal article" date="2016" name="Mol. Cell. Biol.">
        <title>The poly(C) binding protein Pcbp2 and its retrotransposed derivative Pcbp1 are independently essential to mouse development.</title>
        <authorList>
            <person name="Ghanem L.R."/>
            <person name="Kromer A."/>
            <person name="Silverman I.M."/>
            <person name="Chatterji P."/>
            <person name="Traxler E."/>
            <person name="Penzo-Mendez A."/>
            <person name="Weiss M.J."/>
            <person name="Stanger B.Z."/>
            <person name="Liebhaber S.A."/>
        </authorList>
    </citation>
    <scope>DISRUPTION PHENOTYPE</scope>
</reference>
<reference key="8">
    <citation type="journal article" date="2021" name="Mol. Cell. Biol.">
        <title>RNA-binding proteins PCBP1 and PCBP2 are critical determinants of murine erythropoiesis.</title>
        <authorList>
            <person name="Ji X."/>
            <person name="Jha A."/>
            <person name="Humenik J."/>
            <person name="Ghanem L.R."/>
            <person name="Kromer A."/>
            <person name="Duncan-Lewis C."/>
            <person name="Traxler E."/>
            <person name="Weiss M.J."/>
            <person name="Barash Y."/>
            <person name="Liebhaber S.A."/>
        </authorList>
    </citation>
    <scope>FUNCTION</scope>
    <scope>DISRUPTION PHENOTYPE</scope>
</reference>
<comment type="function">
    <text evidence="1 4 5 6">Single-stranded nucleic acid binding protein that binds preferentially to oligo dC (PubMed:8208614, PubMed:8367306). Major cellular poly(rC)-binding protein (By similarity). Also binds poly(rU) (By similarity). Acts as a negative regulator of antiviral signaling (By similarity). Negatively regulates cellular antiviral responses mediated by MAVS signaling (By similarity). It acts as an adapter between MAVS and the E3 ubiquitin ligase ITCH, therefore triggering MAVS ubiquitination and degradation (By similarity). Negativeley regulates the cGAS-STING pathway via interaction with CGAS, preventing the formation of liquid-like droplets in which CGAS is activated (By similarity). Together with PCBP1, required for erythropoiesis, possibly by regulating mRNA splicing (PubMed:34180713).</text>
</comment>
<comment type="subunit">
    <text evidence="1">Identified in a mRNP complex, at least composed of DHX9, DDX3X, ELAVL1, HNRNPU, IGF2BP1, ILF3, PABPC1, PCBP2, PTBP2, STAU1, STAU2, SYNCRIP and YBX1. Interacts with IFIH1 and RNF135. Interacts with MAVS (via C-terminus) and ITCH (via WW domains). Interacts with CGAS; preventing the formation of liquid-like droplets in which CGAS is activated.</text>
</comment>
<comment type="subcellular location">
    <subcellularLocation>
        <location evidence="1">Nucleus</location>
    </subcellularLocation>
    <subcellularLocation>
        <location evidence="1">Cytoplasm</location>
    </subcellularLocation>
    <text evidence="1">Loosely bound in the nucleus. May shuttle between the nucleus and the cytoplasm.</text>
</comment>
<comment type="alternative products">
    <event type="alternative splicing"/>
    <isoform>
        <id>Q61990-1</id>
        <name>1</name>
        <sequence type="displayed"/>
    </isoform>
    <isoform>
        <id>Q61990-2</id>
        <name>2</name>
        <sequence type="described" ref="VSP_002820"/>
    </isoform>
    <isoform>
        <id>Q61990-3</id>
        <name>3</name>
        <sequence type="described" ref="VSP_002821"/>
    </isoform>
</comment>
<comment type="domain">
    <text evidence="1">The KH domains mediates poly(C) binding.</text>
</comment>
<comment type="PTM">
    <text evidence="1">Phosphorylated. The non-phosphorylated form(s) exhibited the strongest poly(rC)-binding activity.</text>
</comment>
<comment type="disruption phenotype">
    <text evidence="3 4">Embryos undergo normal development until midgestation (12.5 to 13.5 dpc), at which time they undergo a dramatic loss in viability associated with combined cardiovascular and hematopoietic abnormalities (PubMed:26527618). Conditional deletion in the erythroid lineage is not lethal and does not lead to defects in the hematopoietic pathway (PubMed:34180713). Mice lacking Pcbp1 and Pcbp2 in the erythroid lineage die at midgestation; lethality is caused by impaired erythroid development and loss of blood formation (PubMed:34180713).</text>
</comment>
<gene>
    <name type="primary">Pcbp2</name>
    <name type="synonym">Cbp</name>
    <name type="synonym">Hnrnpx</name>
    <name type="synonym">Hnrpx</name>
</gene>
<accession>Q61990</accession>
<accession>Q61383</accession>
<accession>Q62042</accession>
<proteinExistence type="evidence at protein level"/>
<organism>
    <name type="scientific">Mus musculus</name>
    <name type="common">Mouse</name>
    <dbReference type="NCBI Taxonomy" id="10090"/>
    <lineage>
        <taxon>Eukaryota</taxon>
        <taxon>Metazoa</taxon>
        <taxon>Chordata</taxon>
        <taxon>Craniata</taxon>
        <taxon>Vertebrata</taxon>
        <taxon>Euteleostomi</taxon>
        <taxon>Mammalia</taxon>
        <taxon>Eutheria</taxon>
        <taxon>Euarchontoglires</taxon>
        <taxon>Glires</taxon>
        <taxon>Rodentia</taxon>
        <taxon>Myomorpha</taxon>
        <taxon>Muroidea</taxon>
        <taxon>Muridae</taxon>
        <taxon>Murinae</taxon>
        <taxon>Mus</taxon>
        <taxon>Mus</taxon>
    </lineage>
</organism>
<name>PCBP2_MOUSE</name>
<protein>
    <recommendedName>
        <fullName>Poly(rC)-binding protein 2</fullName>
    </recommendedName>
    <alternativeName>
        <fullName>Alpha-CP2</fullName>
    </alternativeName>
    <alternativeName>
        <fullName>CTBP</fullName>
        <shortName>CBP</shortName>
    </alternativeName>
    <alternativeName>
        <fullName>Putative heterogeneous nuclear ribonucleoprotein X</fullName>
        <shortName>hnRNP X</shortName>
    </alternativeName>
</protein>
<sequence length="362" mass="38222">MDTGVIEGGLNVTLTIRLLMHGKEVGSIIGKKGESVKKMREESGARINISEGNCPERIITLAGPTNAIFKAFAMIIDKLEEDISSSMTNSTAASRPPVTLRLVVPASQCGSLIGKGGCKIKEIRESTGAQVQVAGDMLPNSTERAITIAGIPQSIIECVKQICVVMLESPPKGVTIPYRPKPSSSPVIFAGGQDRYSTGSDSASFPHTTPSMCLNPDLEGPPLEAYTIQGQYAIPQPDLTKLHQLAMQQSHFPMTHGNTGFSGIESSSPEVKGYWAGLDASAQTTSHELTIPNDLIGCIIGRQGAKINEIRQMSGAQIKIANPVEGSTDRQVTITGSAASISLAQYLINVRLSSETGGMGSS</sequence>
<keyword id="KW-0025">Alternative splicing</keyword>
<keyword id="KW-0051">Antiviral defense</keyword>
<keyword id="KW-0963">Cytoplasm</keyword>
<keyword id="KW-0903">Direct protein sequencing</keyword>
<keyword id="KW-0238">DNA-binding</keyword>
<keyword id="KW-0391">Immunity</keyword>
<keyword id="KW-0399">Innate immunity</keyword>
<keyword id="KW-1017">Isopeptide bond</keyword>
<keyword id="KW-0539">Nucleus</keyword>
<keyword id="KW-0597">Phosphoprotein</keyword>
<keyword id="KW-1185">Reference proteome</keyword>
<keyword id="KW-0677">Repeat</keyword>
<keyword id="KW-0687">Ribonucleoprotein</keyword>
<keyword id="KW-0694">RNA-binding</keyword>
<keyword id="KW-0832">Ubl conjugation</keyword>
<evidence type="ECO:0000250" key="1">
    <source>
        <dbReference type="UniProtKB" id="Q15366"/>
    </source>
</evidence>
<evidence type="ECO:0000255" key="2">
    <source>
        <dbReference type="PROSITE-ProRule" id="PRU00117"/>
    </source>
</evidence>
<evidence type="ECO:0000269" key="3">
    <source>
    </source>
</evidence>
<evidence type="ECO:0000269" key="4">
    <source>
    </source>
</evidence>
<evidence type="ECO:0000269" key="5">
    <source>
    </source>
</evidence>
<evidence type="ECO:0000269" key="6">
    <source>
    </source>
</evidence>
<evidence type="ECO:0000303" key="7">
    <source>
    </source>
</evidence>
<evidence type="ECO:0000305" key="8"/>